<evidence type="ECO:0000250" key="1">
    <source>
        <dbReference type="UniProtKB" id="Q96NY9"/>
    </source>
</evidence>
<evidence type="ECO:0000255" key="2"/>
<evidence type="ECO:0000256" key="3">
    <source>
        <dbReference type="SAM" id="MobiDB-lite"/>
    </source>
</evidence>
<evidence type="ECO:0000305" key="4"/>
<evidence type="ECO:0007829" key="5">
    <source>
        <dbReference type="PDB" id="2ZIU"/>
    </source>
</evidence>
<evidence type="ECO:0007829" key="6">
    <source>
        <dbReference type="PDB" id="2ZIV"/>
    </source>
</evidence>
<evidence type="ECO:0007829" key="7">
    <source>
        <dbReference type="PDB" id="2ZIW"/>
    </source>
</evidence>
<proteinExistence type="evidence at protein level"/>
<comment type="function">
    <text evidence="1">Catalytic subunit of two functionally distinct, structure-specific, heterodimeric DNA endonucleases MUS81-EME1 and MUS81-EME2 that are involved in the maintenance of genome stability. Both endonucleases have essentially the same substrate specificity though MUS81-EME2 is more active than its MUS81-EME1 counterpart. Both cleave 3'-flaps and nicked Holliday junctions, and exhibit limited endonuclease activity with 5' flaps and nicked double-stranded DNAs. MUS81-EME2 which is active during the replication of DNA is more specifically involved in replication fork processing. Replication forks frequently encounter obstacles to their passage, including DNA base lesions, DNA interstrand cross-links, difficult-to-replicate sequences, transcription bubbles, or tightly bound proteins. One mechanism for the restart of a stalled replication fork involves nucleolytic cleavage mediated by the MUS81-EME2 endonuclease. By acting upon the stalled fork, MUS81-EME2 generates a DNA double-strand break (DSB) that can be repaired by homologous recombination, leading to the restoration of an active fork. MUS81-EME2 could also function in telomere maintenance. MUS81-EME1, on the other hand, is active later in the cell cycle and functions in the resolution of mitotic recombination intermediates including the Holliday junctions, the four-way DNA intermediates that form during homologous recombination.</text>
</comment>
<comment type="cofactor">
    <cofactor evidence="1">
        <name>Mg(2+)</name>
        <dbReference type="ChEBI" id="CHEBI:18420"/>
    </cofactor>
</comment>
<comment type="subunit">
    <text evidence="1">Part of the heterodimeric DNA structure-specific endonuclease complex MUS81-EME1. Part of the heterodimeric DNA structure-specific endonuclease complex MUS81-EME2.</text>
</comment>
<comment type="subcellular location">
    <subcellularLocation>
        <location evidence="1">Nucleus</location>
        <location evidence="1">Nucleolus</location>
    </subcellularLocation>
</comment>
<comment type="similarity">
    <text evidence="4">Belongs to the XPF family.</text>
</comment>
<name>MUS81_DANRE</name>
<organism>
    <name type="scientific">Danio rerio</name>
    <name type="common">Zebrafish</name>
    <name type="synonym">Brachydanio rerio</name>
    <dbReference type="NCBI Taxonomy" id="7955"/>
    <lineage>
        <taxon>Eukaryota</taxon>
        <taxon>Metazoa</taxon>
        <taxon>Chordata</taxon>
        <taxon>Craniata</taxon>
        <taxon>Vertebrata</taxon>
        <taxon>Euteleostomi</taxon>
        <taxon>Actinopterygii</taxon>
        <taxon>Neopterygii</taxon>
        <taxon>Teleostei</taxon>
        <taxon>Ostariophysi</taxon>
        <taxon>Cypriniformes</taxon>
        <taxon>Danionidae</taxon>
        <taxon>Danioninae</taxon>
        <taxon>Danio</taxon>
    </lineage>
</organism>
<reference key="1">
    <citation type="submission" date="2003-08" db="EMBL/GenBank/DDBJ databases">
        <authorList>
            <consortium name="NIH - Zebrafish Gene Collection (ZGC) project"/>
        </authorList>
    </citation>
    <scope>NUCLEOTIDE SEQUENCE [LARGE SCALE MRNA]</scope>
    <source>
        <strain>AB</strain>
    </source>
</reference>
<reference key="2">
    <citation type="journal article" date="2008" name="Genes Dev.">
        <title>Crystal structure of the Mus81-Eme1 complex.</title>
        <authorList>
            <person name="Chang J.H."/>
            <person name="Kim J.J."/>
            <person name="Choi J.M."/>
            <person name="Lee J.H."/>
            <person name="Cho Y."/>
        </authorList>
    </citation>
    <scope>X-RAY CRYSTALLOGRAPHY (2.7 ANGSTROMS) OF 295-604</scope>
</reference>
<dbReference type="EC" id="3.1.22.-" evidence="1"/>
<dbReference type="EMBL" id="BC055679">
    <property type="protein sequence ID" value="AAH55679.1"/>
    <property type="molecule type" value="mRNA"/>
</dbReference>
<dbReference type="RefSeq" id="NP_998683.1">
    <property type="nucleotide sequence ID" value="NM_213518.1"/>
</dbReference>
<dbReference type="PDB" id="2ZIU">
    <property type="method" value="X-ray"/>
    <property type="resolution" value="2.70 A"/>
    <property type="chains" value="A=295-604"/>
</dbReference>
<dbReference type="PDB" id="2ZIV">
    <property type="method" value="X-ray"/>
    <property type="resolution" value="2.70 A"/>
    <property type="chains" value="A=295-604"/>
</dbReference>
<dbReference type="PDB" id="2ZIW">
    <property type="method" value="X-ray"/>
    <property type="resolution" value="2.80 A"/>
    <property type="chains" value="A=295-604"/>
</dbReference>
<dbReference type="PDBsum" id="2ZIU"/>
<dbReference type="PDBsum" id="2ZIV"/>
<dbReference type="PDBsum" id="2ZIW"/>
<dbReference type="SMR" id="Q7SXA9"/>
<dbReference type="FunCoup" id="Q7SXA9">
    <property type="interactions" value="1323"/>
</dbReference>
<dbReference type="STRING" id="7955.ENSDARP00000091555"/>
<dbReference type="PaxDb" id="7955-ENSDARP00000091555"/>
<dbReference type="GeneID" id="406839"/>
<dbReference type="KEGG" id="dre:406839"/>
<dbReference type="AGR" id="ZFIN:ZDB-GENE-040426-2923"/>
<dbReference type="CTD" id="80198"/>
<dbReference type="ZFIN" id="ZDB-GENE-040426-2923">
    <property type="gene designation" value="mus81"/>
</dbReference>
<dbReference type="eggNOG" id="KOG2379">
    <property type="taxonomic scope" value="Eukaryota"/>
</dbReference>
<dbReference type="InParanoid" id="Q7SXA9"/>
<dbReference type="OrthoDB" id="5963188at2759"/>
<dbReference type="Reactome" id="R-DRE-5693568">
    <property type="pathway name" value="Resolution of D-loop Structures through Holliday Junction Intermediates"/>
</dbReference>
<dbReference type="EvolutionaryTrace" id="Q7SXA9"/>
<dbReference type="PRO" id="PR:Q7SXA9"/>
<dbReference type="Proteomes" id="UP000000437">
    <property type="component" value="Alternate scaffold 7"/>
</dbReference>
<dbReference type="Proteomes" id="UP000000437">
    <property type="component" value="Chromosome 7"/>
</dbReference>
<dbReference type="GO" id="GO:0048476">
    <property type="term" value="C:Holliday junction resolvase complex"/>
    <property type="evidence" value="ECO:0000318"/>
    <property type="project" value="GO_Central"/>
</dbReference>
<dbReference type="GO" id="GO:0005634">
    <property type="term" value="C:nucleus"/>
    <property type="evidence" value="ECO:0000318"/>
    <property type="project" value="GO_Central"/>
</dbReference>
<dbReference type="GO" id="GO:0048257">
    <property type="term" value="F:3'-flap endonuclease activity"/>
    <property type="evidence" value="ECO:0000318"/>
    <property type="project" value="GO_Central"/>
</dbReference>
<dbReference type="GO" id="GO:0008821">
    <property type="term" value="F:crossover junction DNA endonuclease activity"/>
    <property type="evidence" value="ECO:0007669"/>
    <property type="project" value="InterPro"/>
</dbReference>
<dbReference type="GO" id="GO:0003677">
    <property type="term" value="F:DNA binding"/>
    <property type="evidence" value="ECO:0007669"/>
    <property type="project" value="InterPro"/>
</dbReference>
<dbReference type="GO" id="GO:0046872">
    <property type="term" value="F:metal ion binding"/>
    <property type="evidence" value="ECO:0007669"/>
    <property type="project" value="UniProtKB-KW"/>
</dbReference>
<dbReference type="GO" id="GO:0006308">
    <property type="term" value="P:DNA catabolic process"/>
    <property type="evidence" value="ECO:0007669"/>
    <property type="project" value="InterPro"/>
</dbReference>
<dbReference type="GO" id="GO:0000727">
    <property type="term" value="P:double-strand break repair via break-induced replication"/>
    <property type="evidence" value="ECO:0000318"/>
    <property type="project" value="GO_Central"/>
</dbReference>
<dbReference type="GO" id="GO:0031573">
    <property type="term" value="P:mitotic intra-S DNA damage checkpoint signaling"/>
    <property type="evidence" value="ECO:0000318"/>
    <property type="project" value="GO_Central"/>
</dbReference>
<dbReference type="GO" id="GO:0000712">
    <property type="term" value="P:resolution of meiotic recombination intermediates"/>
    <property type="evidence" value="ECO:0000318"/>
    <property type="project" value="GO_Central"/>
</dbReference>
<dbReference type="CDD" id="cd21036">
    <property type="entry name" value="WH_MUS81"/>
    <property type="match status" value="1"/>
</dbReference>
<dbReference type="CDD" id="cd20074">
    <property type="entry name" value="XPF_nuclease_Mus81"/>
    <property type="match status" value="1"/>
</dbReference>
<dbReference type="FunFam" id="1.10.10.10:FF:000307">
    <property type="entry name" value="Crossover junction endonuclease MUS81"/>
    <property type="match status" value="1"/>
</dbReference>
<dbReference type="FunFam" id="1.10.150.670:FF:000001">
    <property type="entry name" value="Crossover junction endonuclease MUS81"/>
    <property type="match status" value="1"/>
</dbReference>
<dbReference type="FunFam" id="3.40.50.10130:FF:000003">
    <property type="entry name" value="Crossover junction endonuclease MUS81"/>
    <property type="match status" value="1"/>
</dbReference>
<dbReference type="FunFam" id="1.10.150.110:FF:000001">
    <property type="entry name" value="Putative Crossover junction endonuclease MUS81"/>
    <property type="match status" value="1"/>
</dbReference>
<dbReference type="Gene3D" id="3.40.50.10130">
    <property type="match status" value="1"/>
</dbReference>
<dbReference type="Gene3D" id="1.10.150.670">
    <property type="entry name" value="Crossover junction endonuclease EME1, DNA-binding domain"/>
    <property type="match status" value="1"/>
</dbReference>
<dbReference type="Gene3D" id="1.10.150.110">
    <property type="entry name" value="DNA polymerase beta, N-terminal domain-like"/>
    <property type="match status" value="1"/>
</dbReference>
<dbReference type="Gene3D" id="1.10.10.10">
    <property type="entry name" value="Winged helix-like DNA-binding domain superfamily/Winged helix DNA-binding domain"/>
    <property type="match status" value="1"/>
</dbReference>
<dbReference type="InterPro" id="IPR027421">
    <property type="entry name" value="DNA_pol_lamdba_lyase_dom_sf"/>
</dbReference>
<dbReference type="InterPro" id="IPR042530">
    <property type="entry name" value="EME1/EME2_C"/>
</dbReference>
<dbReference type="InterPro" id="IPR006166">
    <property type="entry name" value="ERCC4_domain"/>
</dbReference>
<dbReference type="InterPro" id="IPR033309">
    <property type="entry name" value="Mus81"/>
</dbReference>
<dbReference type="InterPro" id="IPR011335">
    <property type="entry name" value="Restrct_endonuc-II-like"/>
</dbReference>
<dbReference type="InterPro" id="IPR036388">
    <property type="entry name" value="WH-like_DNA-bd_sf"/>
</dbReference>
<dbReference type="InterPro" id="IPR047417">
    <property type="entry name" value="WH_MUS81"/>
</dbReference>
<dbReference type="InterPro" id="IPR047416">
    <property type="entry name" value="XPF_nuclease_Mus81"/>
</dbReference>
<dbReference type="PANTHER" id="PTHR13451">
    <property type="entry name" value="CLASS II CROSSOVER JUNCTION ENDONUCLEASE MUS81"/>
    <property type="match status" value="1"/>
</dbReference>
<dbReference type="PANTHER" id="PTHR13451:SF0">
    <property type="entry name" value="CROSSOVER JUNCTION ENDONUCLEASE MUS81"/>
    <property type="match status" value="1"/>
</dbReference>
<dbReference type="Pfam" id="PF21292">
    <property type="entry name" value="EME1-MUS81_C"/>
    <property type="match status" value="1"/>
</dbReference>
<dbReference type="Pfam" id="PF02732">
    <property type="entry name" value="ERCC4"/>
    <property type="match status" value="1"/>
</dbReference>
<dbReference type="Pfam" id="PF21136">
    <property type="entry name" value="MUS81-like_WH"/>
    <property type="match status" value="1"/>
</dbReference>
<dbReference type="SMART" id="SM00891">
    <property type="entry name" value="ERCC4"/>
    <property type="match status" value="1"/>
</dbReference>
<dbReference type="SUPFAM" id="SSF47802">
    <property type="entry name" value="DNA polymerase beta, N-terminal domain-like"/>
    <property type="match status" value="1"/>
</dbReference>
<dbReference type="SUPFAM" id="SSF52980">
    <property type="entry name" value="Restriction endonuclease-like"/>
    <property type="match status" value="1"/>
</dbReference>
<keyword id="KW-0002">3D-structure</keyword>
<keyword id="KW-0227">DNA damage</keyword>
<keyword id="KW-0233">DNA recombination</keyword>
<keyword id="KW-0234">DNA repair</keyword>
<keyword id="KW-0255">Endonuclease</keyword>
<keyword id="KW-0378">Hydrolase</keyword>
<keyword id="KW-0460">Magnesium</keyword>
<keyword id="KW-0479">Metal-binding</keyword>
<keyword id="KW-0540">Nuclease</keyword>
<keyword id="KW-0539">Nucleus</keyword>
<keyword id="KW-1185">Reference proteome</keyword>
<sequence length="604" mass="68017">MPTDQVCLGRKRPLPSCPNPLFLQWLTELRDSAKEKGLKTHFVYQKAINSLKKYPLPLKNGKEAKILQNFGDGICKILDERLQKHYRENGSDAAVHLASSKQMEESQKEPSGNFSEHTKLTQKEVRKEKGAKKKREYVPQKRSGGYAVLLTLYRHMQMPGSKGFMFRNELQTEAQPLCEKSFTVPDLGSKYTAWSSVSTLIQKELVVKTHNPARYSLTDQGLSLAEKLDSEETGTRHEDVDSQDGQNVVDLTLEEEDEDEEKESWSSERPAVALPVNQARGLMSESDPMGKSQTSETGRTAMGWHLSPGSYDIVLCVDLCETTGGSSVRKQELVKELQRNSVTFDVRKLNVGDFLWVARERVTPVPGQLRPPVGKELVLDYIIERKRMDDLCGSIIDGRFREQKFRLKRCGLRKPIYLVEECGSAAAHLSIPESTLQQAIVNTQVVDGFFVKRVQDAKESAAYLTIMTRYLQKLYQNCTLLCRSRELEGDGEAESEKMVANLSCSLMAFTEFNYGAIKNKCQTVREVFARQLMQISGVSGDKAAAVLKHYSTVSSLLQAYDKCSSETEKEKLLSSVKYGKLKRNLGPALSRTIYQLYCTRGPLS</sequence>
<feature type="chain" id="PRO_0000223637" description="Structure-specific endonuclease subunit MUS81">
    <location>
        <begin position="1"/>
        <end position="604"/>
    </location>
</feature>
<feature type="domain" description="ERCC4" evidence="2">
    <location>
        <begin position="314"/>
        <end position="423"/>
    </location>
</feature>
<feature type="region of interest" description="Disordered" evidence="3">
    <location>
        <begin position="93"/>
        <end position="138"/>
    </location>
</feature>
<feature type="region of interest" description="Winged helix domain (WHD); critical for endonuclease activity" evidence="1">
    <location>
        <begin position="138"/>
        <end position="254"/>
    </location>
</feature>
<feature type="region of interest" description="Disordered" evidence="3">
    <location>
        <begin position="227"/>
        <end position="248"/>
    </location>
</feature>
<feature type="region of interest" description="Disordered" evidence="3">
    <location>
        <begin position="253"/>
        <end position="272"/>
    </location>
</feature>
<feature type="region of interest" description="Helix-hairpin-helix (2HhH); involved in DNA recognition and bending" evidence="1">
    <location>
        <begin position="524"/>
        <end position="598"/>
    </location>
</feature>
<feature type="compositionally biased region" description="Basic and acidic residues" evidence="3">
    <location>
        <begin position="116"/>
        <end position="128"/>
    </location>
</feature>
<feature type="compositionally biased region" description="Basic and acidic residues" evidence="3">
    <location>
        <begin position="227"/>
        <end position="240"/>
    </location>
</feature>
<feature type="compositionally biased region" description="Acidic residues" evidence="3">
    <location>
        <begin position="253"/>
        <end position="262"/>
    </location>
</feature>
<feature type="active site" evidence="1">
    <location>
        <position position="318"/>
    </location>
</feature>
<feature type="active site" evidence="1">
    <location>
        <position position="321"/>
    </location>
</feature>
<feature type="active site" evidence="1">
    <location>
        <position position="353"/>
    </location>
</feature>
<feature type="binding site" evidence="1">
    <location>
        <position position="318"/>
    </location>
    <ligand>
        <name>Mg(2+)</name>
        <dbReference type="ChEBI" id="CHEBI:18420"/>
        <label>1</label>
    </ligand>
</feature>
<feature type="binding site" evidence="1">
    <location>
        <position position="321"/>
    </location>
    <ligand>
        <name>Mg(2+)</name>
        <dbReference type="ChEBI" id="CHEBI:18420"/>
        <label>1</label>
    </ligand>
</feature>
<feature type="binding site" evidence="1">
    <location>
        <position position="321"/>
    </location>
    <ligand>
        <name>Mg(2+)</name>
        <dbReference type="ChEBI" id="CHEBI:18420"/>
        <label>2</label>
    </ligand>
</feature>
<feature type="binding site" evidence="1">
    <location>
        <position position="353"/>
    </location>
    <ligand>
        <name>Mg(2+)</name>
        <dbReference type="ChEBI" id="CHEBI:18420"/>
        <label>1</label>
    </ligand>
</feature>
<feature type="binding site" evidence="1">
    <location>
        <position position="353"/>
    </location>
    <ligand>
        <name>Mg(2+)</name>
        <dbReference type="ChEBI" id="CHEBI:18420"/>
        <label>2</label>
    </ligand>
</feature>
<feature type="binding site" evidence="1">
    <location>
        <position position="384"/>
    </location>
    <ligand>
        <name>Mg(2+)</name>
        <dbReference type="ChEBI" id="CHEBI:18420"/>
        <label>1</label>
    </ligand>
</feature>
<feature type="binding site" evidence="1">
    <location>
        <position position="384"/>
    </location>
    <ligand>
        <name>Mg(2+)</name>
        <dbReference type="ChEBI" id="CHEBI:18420"/>
        <label>2</label>
    </ligand>
</feature>
<feature type="binding site" evidence="1">
    <location>
        <position position="385"/>
    </location>
    <ligand>
        <name>Mg(2+)</name>
        <dbReference type="ChEBI" id="CHEBI:18420"/>
        <label>2</label>
    </ligand>
</feature>
<feature type="strand" evidence="5">
    <location>
        <begin position="310"/>
        <end position="317"/>
    </location>
</feature>
<feature type="helix" evidence="5">
    <location>
        <begin position="319"/>
        <end position="321"/>
    </location>
</feature>
<feature type="helix" evidence="5">
    <location>
        <begin position="332"/>
        <end position="338"/>
    </location>
</feature>
<feature type="turn" evidence="5">
    <location>
        <begin position="339"/>
        <end position="341"/>
    </location>
</feature>
<feature type="strand" evidence="7">
    <location>
        <begin position="344"/>
        <end position="346"/>
    </location>
</feature>
<feature type="strand" evidence="5">
    <location>
        <begin position="353"/>
        <end position="360"/>
    </location>
</feature>
<feature type="strand" evidence="5">
    <location>
        <begin position="376"/>
        <end position="387"/>
    </location>
</feature>
<feature type="helix" evidence="5">
    <location>
        <begin position="388"/>
        <end position="396"/>
    </location>
</feature>
<feature type="helix" evidence="5">
    <location>
        <begin position="400"/>
        <end position="408"/>
    </location>
</feature>
<feature type="strand" evidence="5">
    <location>
        <begin position="413"/>
        <end position="421"/>
    </location>
</feature>
<feature type="strand" evidence="5">
    <location>
        <begin position="423"/>
        <end position="425"/>
    </location>
</feature>
<feature type="helix" evidence="5">
    <location>
        <begin position="426"/>
        <end position="429"/>
    </location>
</feature>
<feature type="helix" evidence="5">
    <location>
        <begin position="433"/>
        <end position="445"/>
    </location>
</feature>
<feature type="strand" evidence="5">
    <location>
        <begin position="450"/>
        <end position="453"/>
    </location>
</feature>
<feature type="helix" evidence="5">
    <location>
        <begin position="457"/>
        <end position="473"/>
    </location>
</feature>
<feature type="turn" evidence="5">
    <location>
        <begin position="474"/>
        <end position="477"/>
    </location>
</feature>
<feature type="strand" evidence="6">
    <location>
        <begin position="480"/>
        <end position="482"/>
    </location>
</feature>
<feature type="strand" evidence="6">
    <location>
        <begin position="504"/>
        <end position="508"/>
    </location>
</feature>
<feature type="helix" evidence="5">
    <location>
        <begin position="509"/>
        <end position="519"/>
    </location>
</feature>
<feature type="helix" evidence="5">
    <location>
        <begin position="524"/>
        <end position="532"/>
    </location>
</feature>
<feature type="helix" evidence="5">
    <location>
        <begin position="540"/>
        <end position="549"/>
    </location>
</feature>
<feature type="helix" evidence="5">
    <location>
        <begin position="553"/>
        <end position="562"/>
    </location>
</feature>
<feature type="helix" evidence="5">
    <location>
        <begin position="566"/>
        <end position="569"/>
    </location>
</feature>
<feature type="turn" evidence="5">
    <location>
        <begin position="570"/>
        <end position="575"/>
    </location>
</feature>
<feature type="turn" evidence="5">
    <location>
        <begin position="579"/>
        <end position="582"/>
    </location>
</feature>
<feature type="helix" evidence="5">
    <location>
        <begin position="586"/>
        <end position="598"/>
    </location>
</feature>
<accession>Q7SXA9</accession>
<gene>
    <name type="primary">mus81</name>
</gene>
<protein>
    <recommendedName>
        <fullName evidence="1">Structure-specific endonuclease subunit MUS81</fullName>
        <ecNumber evidence="1">3.1.22.-</ecNumber>
    </recommendedName>
    <alternativeName>
        <fullName>Crossover junction endonuclease MUS81</fullName>
    </alternativeName>
</protein>